<reference key="1">
    <citation type="journal article" date="2013" name="Nature">
        <title>The zebrafish reference genome sequence and its relationship to the human genome.</title>
        <authorList>
            <person name="Howe K."/>
            <person name="Clark M.D."/>
            <person name="Torroja C.F."/>
            <person name="Torrance J."/>
            <person name="Berthelot C."/>
            <person name="Muffato M."/>
            <person name="Collins J.E."/>
            <person name="Humphray S."/>
            <person name="McLaren K."/>
            <person name="Matthews L."/>
            <person name="McLaren S."/>
            <person name="Sealy I."/>
            <person name="Caccamo M."/>
            <person name="Churcher C."/>
            <person name="Scott C."/>
            <person name="Barrett J.C."/>
            <person name="Koch R."/>
            <person name="Rauch G.J."/>
            <person name="White S."/>
            <person name="Chow W."/>
            <person name="Kilian B."/>
            <person name="Quintais L.T."/>
            <person name="Guerra-Assuncao J.A."/>
            <person name="Zhou Y."/>
            <person name="Gu Y."/>
            <person name="Yen J."/>
            <person name="Vogel J.H."/>
            <person name="Eyre T."/>
            <person name="Redmond S."/>
            <person name="Banerjee R."/>
            <person name="Chi J."/>
            <person name="Fu B."/>
            <person name="Langley E."/>
            <person name="Maguire S.F."/>
            <person name="Laird G.K."/>
            <person name="Lloyd D."/>
            <person name="Kenyon E."/>
            <person name="Donaldson S."/>
            <person name="Sehra H."/>
            <person name="Almeida-King J."/>
            <person name="Loveland J."/>
            <person name="Trevanion S."/>
            <person name="Jones M."/>
            <person name="Quail M."/>
            <person name="Willey D."/>
            <person name="Hunt A."/>
            <person name="Burton J."/>
            <person name="Sims S."/>
            <person name="McLay K."/>
            <person name="Plumb B."/>
            <person name="Davis J."/>
            <person name="Clee C."/>
            <person name="Oliver K."/>
            <person name="Clark R."/>
            <person name="Riddle C."/>
            <person name="Elliot D."/>
            <person name="Threadgold G."/>
            <person name="Harden G."/>
            <person name="Ware D."/>
            <person name="Begum S."/>
            <person name="Mortimore B."/>
            <person name="Kerry G."/>
            <person name="Heath P."/>
            <person name="Phillimore B."/>
            <person name="Tracey A."/>
            <person name="Corby N."/>
            <person name="Dunn M."/>
            <person name="Johnson C."/>
            <person name="Wood J."/>
            <person name="Clark S."/>
            <person name="Pelan S."/>
            <person name="Griffiths G."/>
            <person name="Smith M."/>
            <person name="Glithero R."/>
            <person name="Howden P."/>
            <person name="Barker N."/>
            <person name="Lloyd C."/>
            <person name="Stevens C."/>
            <person name="Harley J."/>
            <person name="Holt K."/>
            <person name="Panagiotidis G."/>
            <person name="Lovell J."/>
            <person name="Beasley H."/>
            <person name="Henderson C."/>
            <person name="Gordon D."/>
            <person name="Auger K."/>
            <person name="Wright D."/>
            <person name="Collins J."/>
            <person name="Raisen C."/>
            <person name="Dyer L."/>
            <person name="Leung K."/>
            <person name="Robertson L."/>
            <person name="Ambridge K."/>
            <person name="Leongamornlert D."/>
            <person name="McGuire S."/>
            <person name="Gilderthorp R."/>
            <person name="Griffiths C."/>
            <person name="Manthravadi D."/>
            <person name="Nichol S."/>
            <person name="Barker G."/>
            <person name="Whitehead S."/>
            <person name="Kay M."/>
            <person name="Brown J."/>
            <person name="Murnane C."/>
            <person name="Gray E."/>
            <person name="Humphries M."/>
            <person name="Sycamore N."/>
            <person name="Barker D."/>
            <person name="Saunders D."/>
            <person name="Wallis J."/>
            <person name="Babbage A."/>
            <person name="Hammond S."/>
            <person name="Mashreghi-Mohammadi M."/>
            <person name="Barr L."/>
            <person name="Martin S."/>
            <person name="Wray P."/>
            <person name="Ellington A."/>
            <person name="Matthews N."/>
            <person name="Ellwood M."/>
            <person name="Woodmansey R."/>
            <person name="Clark G."/>
            <person name="Cooper J."/>
            <person name="Tromans A."/>
            <person name="Grafham D."/>
            <person name="Skuce C."/>
            <person name="Pandian R."/>
            <person name="Andrews R."/>
            <person name="Harrison E."/>
            <person name="Kimberley A."/>
            <person name="Garnett J."/>
            <person name="Fosker N."/>
            <person name="Hall R."/>
            <person name="Garner P."/>
            <person name="Kelly D."/>
            <person name="Bird C."/>
            <person name="Palmer S."/>
            <person name="Gehring I."/>
            <person name="Berger A."/>
            <person name="Dooley C.M."/>
            <person name="Ersan-Urun Z."/>
            <person name="Eser C."/>
            <person name="Geiger H."/>
            <person name="Geisler M."/>
            <person name="Karotki L."/>
            <person name="Kirn A."/>
            <person name="Konantz J."/>
            <person name="Konantz M."/>
            <person name="Oberlander M."/>
            <person name="Rudolph-Geiger S."/>
            <person name="Teucke M."/>
            <person name="Lanz C."/>
            <person name="Raddatz G."/>
            <person name="Osoegawa K."/>
            <person name="Zhu B."/>
            <person name="Rapp A."/>
            <person name="Widaa S."/>
            <person name="Langford C."/>
            <person name="Yang F."/>
            <person name="Schuster S.C."/>
            <person name="Carter N.P."/>
            <person name="Harrow J."/>
            <person name="Ning Z."/>
            <person name="Herrero J."/>
            <person name="Searle S.M."/>
            <person name="Enright A."/>
            <person name="Geisler R."/>
            <person name="Plasterk R.H."/>
            <person name="Lee C."/>
            <person name="Westerfield M."/>
            <person name="de Jong P.J."/>
            <person name="Zon L.I."/>
            <person name="Postlethwait J.H."/>
            <person name="Nusslein-Volhard C."/>
            <person name="Hubbard T.J."/>
            <person name="Roest Crollius H."/>
            <person name="Rogers J."/>
            <person name="Stemple D.L."/>
        </authorList>
    </citation>
    <scope>NUCLEOTIDE SEQUENCE [LARGE SCALE GENOMIC DNA]</scope>
    <source>
        <strain>Tuebingen</strain>
    </source>
</reference>
<reference key="2">
    <citation type="journal article" date="2016" name="Am. J. Hum. Genet.">
        <title>ZNF687 mutations in severe paget disease of bone associated with giant cell tumor.</title>
        <authorList>
            <person name="Divisato G."/>
            <person name="Formicola D."/>
            <person name="Esposito T."/>
            <person name="Merlotti D."/>
            <person name="Pazzaglia L."/>
            <person name="Del Fattore A."/>
            <person name="Siris E."/>
            <person name="Orcel P."/>
            <person name="Brown J.P."/>
            <person name="Nuti R."/>
            <person name="Strazzullo P."/>
            <person name="Benassi M.S."/>
            <person name="Cancela M.L."/>
            <person name="Michou L."/>
            <person name="Rendina D."/>
            <person name="Gennari L."/>
            <person name="Gianfrancesco F."/>
        </authorList>
    </citation>
    <scope>TISSUE SPECIFICITY</scope>
    <scope>DEVELOPMENTAL STAGE</scope>
</reference>
<accession>A0A0R4IYX6</accession>
<proteinExistence type="evidence at transcript level"/>
<protein>
    <recommendedName>
        <fullName>Zinc finger protein 687a</fullName>
    </recommendedName>
</protein>
<sequence>MGDMKTPDFDDLLAAFDIPDIDAKEAIQSDTHGNHNEHSSVVGKERSGSPSLRPSGSPDPPHNDPSVVSVIVKNSVHSDDKAEGNETGEFSSADESQKSPQKGPSKDSSVPTDPFIYNGLKSVSDGSTESPPSLDLAPGQHNGPLWSLSASKATGDDDKHNDAFTNHPASTFQSLPLSNHPSVSSHLISPNFSSKVDSEEAQAINGTLRAGVRRHQSEDEESEPDLGSPALVIQESPISQLCPAPKVPRMQRSPSSVFQPPSPSSPSLPVSNTQMEEPSVQHPKLHSSTNPTSLTSTNNLPVEEKDLEHIIEERDSPESPEPEISQSRTSLPSNSQGAIESKQRITREEAPQDEVMDVSMQEKVDYGAEATEGKSTEPTLVESASDAISNSASSKPLKMRIKTVKKPVVSITRTVSKAATKGGASKGSGASKVQAVARKSLQKIPRSVASPQLLSQSTKVAMLPVSTLQDASTAMLFAASRAQNQMPTALSATAVNITRTSNLPSISSSSIPGVNVRAASGQKTNTGTAKPASIVNSPGAVISRSQSSLVEAFNKILNSKNPLPSYQPDLTSLPPPEWGLRLPSTGYRCLECGDAFALERSLARHYDRRSMRIEVTCNHCSKRLAFFNKCSLLLHAREHKEKGLVMQCSHLVMSPVSVEQMIGQQDTVPIGVLSPAVSALSAIKESGVNLSQSSDHSCPECWSTFKGKQELVAHFQEVEPGGTDTCCLQCSPPMPLWNSCCAAAHRRMHQQLPPLVCPECGLICQTHELNTHLKQTCLHYSRRLGYKCACCHLVFGGVNSQNAVKTHMQTAHCEIFHKCPSCPMAFKSSSGAESHCASQHPELSESARQSKEIYKCVMCRTVFTQKSLLSVHIDTHLTKQKMHVFKCPDCNKLFTQRTSLLEHVKDTHRETSNHDGTSTQNSLVKMESSDGEEWGRDEEEDKGKVSDANSAVPRSQSWSCSQCQTHYTDKENYISHMTEQHGKELKKFPCTLCEGSFSSSSSLRRHIRVKHKGIKRVFYCQLCTGEKRSFSSKLILEKHIQAQHAGERGTATQSQAVPQFTDGADSSSEHDAGVLGGSSVEPESRLAESTLTRRIKGAPVGEQEAKGLRCMPCGFTTEDREEFLQHIVCHRDGGSGAQCQQCGACFASSSSLSRHLFISHRVRDSPSDHAEAALHTCATSVASDSAAAGGSPGSPLSVVGGLLEDGEGKHICKVCGRYFSKPADLNTHFRTHGMAFITAYKTDKPA</sequence>
<evidence type="ECO:0000250" key="1">
    <source>
        <dbReference type="UniProtKB" id="Q8N1G0"/>
    </source>
</evidence>
<evidence type="ECO:0000255" key="2">
    <source>
        <dbReference type="PROSITE-ProRule" id="PRU00042"/>
    </source>
</evidence>
<evidence type="ECO:0000256" key="3">
    <source>
        <dbReference type="SAM" id="MobiDB-lite"/>
    </source>
</evidence>
<evidence type="ECO:0000269" key="4">
    <source>
    </source>
</evidence>
<evidence type="ECO:0000305" key="5"/>
<organism>
    <name type="scientific">Danio rerio</name>
    <name type="common">Zebrafish</name>
    <name type="synonym">Brachydanio rerio</name>
    <dbReference type="NCBI Taxonomy" id="7955"/>
    <lineage>
        <taxon>Eukaryota</taxon>
        <taxon>Metazoa</taxon>
        <taxon>Chordata</taxon>
        <taxon>Craniata</taxon>
        <taxon>Vertebrata</taxon>
        <taxon>Euteleostomi</taxon>
        <taxon>Actinopterygii</taxon>
        <taxon>Neopterygii</taxon>
        <taxon>Teleostei</taxon>
        <taxon>Ostariophysi</taxon>
        <taxon>Cypriniformes</taxon>
        <taxon>Danionidae</taxon>
        <taxon>Danioninae</taxon>
        <taxon>Danio</taxon>
    </lineage>
</organism>
<keyword id="KW-0238">DNA-binding</keyword>
<keyword id="KW-0479">Metal-binding</keyword>
<keyword id="KW-0539">Nucleus</keyword>
<keyword id="KW-1185">Reference proteome</keyword>
<keyword id="KW-0677">Repeat</keyword>
<keyword id="KW-0804">Transcription</keyword>
<keyword id="KW-0805">Transcription regulation</keyword>
<keyword id="KW-0862">Zinc</keyword>
<keyword id="KW-0863">Zinc-finger</keyword>
<comment type="function">
    <text evidence="5">May be involved in transcriptional regulation.</text>
</comment>
<comment type="subcellular location">
    <subcellularLocation>
        <location evidence="1">Nucleus</location>
    </subcellularLocation>
</comment>
<comment type="tissue specificity">
    <text evidence="4">Widely expressed with highest levels in kidney, spleen and ovary.</text>
</comment>
<comment type="developmental stage">
    <text evidence="4">Highly expressed in the initial stages of development (4-cell up to 1k-2k cell stages). Expression slightly increases again between 24 hours and 5 dpf and after 20 dpf. Up-regulated during regeneration of the caudal fin after amputation.</text>
</comment>
<comment type="similarity">
    <text evidence="5">Belongs to the krueppel C2H2-type zinc-finger protein family.</text>
</comment>
<name>Z687A_DANRE</name>
<gene>
    <name type="primary">znf687a</name>
</gene>
<dbReference type="EMBL" id="FP929011">
    <property type="status" value="NOT_ANNOTATED_CDS"/>
    <property type="molecule type" value="Genomic_DNA"/>
</dbReference>
<dbReference type="RefSeq" id="NP_001340793.1">
    <property type="nucleotide sequence ID" value="NM_001353864.1"/>
</dbReference>
<dbReference type="RefSeq" id="XP_001922058.2">
    <property type="nucleotide sequence ID" value="XM_001922023.6"/>
</dbReference>
<dbReference type="FunCoup" id="A0A0R4IYX6">
    <property type="interactions" value="383"/>
</dbReference>
<dbReference type="STRING" id="7955.ENSDARP00000141063"/>
<dbReference type="PaxDb" id="7955-ENSDARP00000103862"/>
<dbReference type="Ensembl" id="ENSDART00000167919">
    <property type="protein sequence ID" value="ENSDARP00000141063"/>
    <property type="gene ID" value="ENSDARG00000102774"/>
</dbReference>
<dbReference type="Ensembl" id="ENSDART00000170604">
    <property type="protein sequence ID" value="ENSDARP00000133103"/>
    <property type="gene ID" value="ENSDARG00000102774"/>
</dbReference>
<dbReference type="GeneID" id="562791"/>
<dbReference type="AGR" id="ZFIN:ZDB-GENE-100922-32"/>
<dbReference type="ZFIN" id="ZDB-GENE-100922-32">
    <property type="gene designation" value="znf687a"/>
</dbReference>
<dbReference type="eggNOG" id="KOG1721">
    <property type="taxonomic scope" value="Eukaryota"/>
</dbReference>
<dbReference type="InParanoid" id="A0A0R4IYX6"/>
<dbReference type="OMA" id="DQHINKF"/>
<dbReference type="OrthoDB" id="7312725at2759"/>
<dbReference type="PRO" id="PR:A0A0R4IYX6"/>
<dbReference type="Proteomes" id="UP000000437">
    <property type="component" value="Chromosome 16"/>
</dbReference>
<dbReference type="Bgee" id="ENSDARG00000102774">
    <property type="expression patterns" value="Expressed in early embryo and 21 other cell types or tissues"/>
</dbReference>
<dbReference type="ExpressionAtlas" id="A0A0R4IYX6">
    <property type="expression patterns" value="baseline"/>
</dbReference>
<dbReference type="GO" id="GO:0005634">
    <property type="term" value="C:nucleus"/>
    <property type="evidence" value="ECO:0007669"/>
    <property type="project" value="UniProtKB-SubCell"/>
</dbReference>
<dbReference type="GO" id="GO:0003677">
    <property type="term" value="F:DNA binding"/>
    <property type="evidence" value="ECO:0007669"/>
    <property type="project" value="UniProtKB-KW"/>
</dbReference>
<dbReference type="GO" id="GO:0008270">
    <property type="term" value="F:zinc ion binding"/>
    <property type="evidence" value="ECO:0007669"/>
    <property type="project" value="UniProtKB-KW"/>
</dbReference>
<dbReference type="Gene3D" id="3.30.160.60">
    <property type="entry name" value="Classic Zinc Finger"/>
    <property type="match status" value="5"/>
</dbReference>
<dbReference type="InterPro" id="IPR045914">
    <property type="entry name" value="Zn532-like"/>
</dbReference>
<dbReference type="InterPro" id="IPR041697">
    <property type="entry name" value="Znf-C2H2_11"/>
</dbReference>
<dbReference type="InterPro" id="IPR036236">
    <property type="entry name" value="Znf_C2H2_sf"/>
</dbReference>
<dbReference type="InterPro" id="IPR013087">
    <property type="entry name" value="Znf_C2H2_type"/>
</dbReference>
<dbReference type="PANTHER" id="PTHR47222">
    <property type="entry name" value="ZINC FINGER PROTEIN 532-RELATED"/>
    <property type="match status" value="1"/>
</dbReference>
<dbReference type="PANTHER" id="PTHR47222:SF2">
    <property type="entry name" value="ZINC FINGER PROTEIN 687"/>
    <property type="match status" value="1"/>
</dbReference>
<dbReference type="Pfam" id="PF00096">
    <property type="entry name" value="zf-C2H2"/>
    <property type="match status" value="4"/>
</dbReference>
<dbReference type="Pfam" id="PF16622">
    <property type="entry name" value="zf-C2H2_11"/>
    <property type="match status" value="1"/>
</dbReference>
<dbReference type="Pfam" id="PF25412">
    <property type="entry name" value="zf-C2H2_ZNF592"/>
    <property type="match status" value="1"/>
</dbReference>
<dbReference type="SMART" id="SM00355">
    <property type="entry name" value="ZnF_C2H2"/>
    <property type="match status" value="14"/>
</dbReference>
<dbReference type="SUPFAM" id="SSF57667">
    <property type="entry name" value="beta-beta-alpha zinc fingers"/>
    <property type="match status" value="3"/>
</dbReference>
<dbReference type="PROSITE" id="PS00028">
    <property type="entry name" value="ZINC_FINGER_C2H2_1"/>
    <property type="match status" value="7"/>
</dbReference>
<dbReference type="PROSITE" id="PS50157">
    <property type="entry name" value="ZINC_FINGER_C2H2_2"/>
    <property type="match status" value="6"/>
</dbReference>
<feature type="chain" id="PRO_0000437166" description="Zinc finger protein 687a">
    <location>
        <begin position="1"/>
        <end position="1246"/>
    </location>
</feature>
<feature type="zinc finger region" description="C2H2-type 1" evidence="2">
    <location>
        <begin position="587"/>
        <end position="619"/>
    </location>
</feature>
<feature type="zinc finger region" description="C2H2-type 2; degenerate" evidence="2">
    <location>
        <begin position="696"/>
        <end position="719"/>
    </location>
</feature>
<feature type="zinc finger region" description="C2H2-type 3" evidence="2">
    <location>
        <begin position="817"/>
        <end position="840"/>
    </location>
</feature>
<feature type="zinc finger region" description="C2H2-type 4" evidence="2">
    <location>
        <begin position="854"/>
        <end position="876"/>
    </location>
</feature>
<feature type="zinc finger region" description="C2H2-type 5" evidence="2">
    <location>
        <begin position="885"/>
        <end position="908"/>
    </location>
</feature>
<feature type="zinc finger region" description="C2H2-type 6" evidence="2">
    <location>
        <begin position="958"/>
        <end position="981"/>
    </location>
</feature>
<feature type="zinc finger region" description="C2H2-type 7" evidence="2">
    <location>
        <begin position="988"/>
        <end position="1011"/>
    </location>
</feature>
<feature type="zinc finger region" description="C2H2-type 8; degenerate" evidence="2">
    <location>
        <begin position="1018"/>
        <end position="1044"/>
    </location>
</feature>
<feature type="zinc finger region" description="C2H2-type 9" evidence="2">
    <location>
        <begin position="1137"/>
        <end position="1160"/>
    </location>
</feature>
<feature type="zinc finger region" description="C2H2-type 10" evidence="2">
    <location>
        <begin position="1210"/>
        <end position="1232"/>
    </location>
</feature>
<feature type="region of interest" description="Disordered" evidence="3">
    <location>
        <begin position="24"/>
        <end position="387"/>
    </location>
</feature>
<feature type="region of interest" description="Disordered" evidence="3">
    <location>
        <begin position="907"/>
        <end position="953"/>
    </location>
</feature>
<feature type="region of interest" description="Disordered" evidence="3">
    <location>
        <begin position="1045"/>
        <end position="1093"/>
    </location>
</feature>
<feature type="compositionally biased region" description="Basic and acidic residues" evidence="3">
    <location>
        <begin position="24"/>
        <end position="47"/>
    </location>
</feature>
<feature type="compositionally biased region" description="Polar residues" evidence="3">
    <location>
        <begin position="88"/>
        <end position="111"/>
    </location>
</feature>
<feature type="compositionally biased region" description="Polar residues" evidence="3">
    <location>
        <begin position="163"/>
        <end position="195"/>
    </location>
</feature>
<feature type="compositionally biased region" description="Low complexity" evidence="3">
    <location>
        <begin position="287"/>
        <end position="301"/>
    </location>
</feature>
<feature type="compositionally biased region" description="Basic and acidic residues" evidence="3">
    <location>
        <begin position="302"/>
        <end position="317"/>
    </location>
</feature>
<feature type="compositionally biased region" description="Polar residues" evidence="3">
    <location>
        <begin position="326"/>
        <end position="338"/>
    </location>
</feature>
<feature type="compositionally biased region" description="Basic and acidic residues" evidence="3">
    <location>
        <begin position="341"/>
        <end position="350"/>
    </location>
</feature>
<feature type="compositionally biased region" description="Basic and acidic residues" evidence="3">
    <location>
        <begin position="360"/>
        <end position="375"/>
    </location>
</feature>
<feature type="compositionally biased region" description="Polar residues" evidence="3">
    <location>
        <begin position="914"/>
        <end position="923"/>
    </location>
</feature>
<feature type="compositionally biased region" description="Acidic residues" evidence="3">
    <location>
        <begin position="929"/>
        <end position="940"/>
    </location>
</feature>